<gene>
    <name evidence="1" type="primary">glyA</name>
    <name type="ordered locus">Sbal_3162</name>
</gene>
<proteinExistence type="inferred from homology"/>
<reference key="1">
    <citation type="submission" date="2007-02" db="EMBL/GenBank/DDBJ databases">
        <title>Complete sequence of chromosome of Shewanella baltica OS155.</title>
        <authorList>
            <consortium name="US DOE Joint Genome Institute"/>
            <person name="Copeland A."/>
            <person name="Lucas S."/>
            <person name="Lapidus A."/>
            <person name="Barry K."/>
            <person name="Detter J.C."/>
            <person name="Glavina del Rio T."/>
            <person name="Hammon N."/>
            <person name="Israni S."/>
            <person name="Dalin E."/>
            <person name="Tice H."/>
            <person name="Pitluck S."/>
            <person name="Sims D.R."/>
            <person name="Brettin T."/>
            <person name="Bruce D."/>
            <person name="Han C."/>
            <person name="Tapia R."/>
            <person name="Brainard J."/>
            <person name="Schmutz J."/>
            <person name="Larimer F."/>
            <person name="Land M."/>
            <person name="Hauser L."/>
            <person name="Kyrpides N."/>
            <person name="Mikhailova N."/>
            <person name="Brettar I."/>
            <person name="Klappenbach J."/>
            <person name="Konstantinidis K."/>
            <person name="Rodrigues J."/>
            <person name="Tiedje J."/>
            <person name="Richardson P."/>
        </authorList>
    </citation>
    <scope>NUCLEOTIDE SEQUENCE [LARGE SCALE GENOMIC DNA]</scope>
    <source>
        <strain>OS155 / ATCC BAA-1091</strain>
    </source>
</reference>
<accession>A3D7D0</accession>
<comment type="function">
    <text evidence="1">Catalyzes the reversible interconversion of serine and glycine with tetrahydrofolate (THF) serving as the one-carbon carrier. This reaction serves as the major source of one-carbon groups required for the biosynthesis of purines, thymidylate, methionine, and other important biomolecules. Also exhibits THF-independent aldolase activity toward beta-hydroxyamino acids, producing glycine and aldehydes, via a retro-aldol mechanism.</text>
</comment>
<comment type="catalytic activity">
    <reaction evidence="1">
        <text>(6R)-5,10-methylene-5,6,7,8-tetrahydrofolate + glycine + H2O = (6S)-5,6,7,8-tetrahydrofolate + L-serine</text>
        <dbReference type="Rhea" id="RHEA:15481"/>
        <dbReference type="ChEBI" id="CHEBI:15377"/>
        <dbReference type="ChEBI" id="CHEBI:15636"/>
        <dbReference type="ChEBI" id="CHEBI:33384"/>
        <dbReference type="ChEBI" id="CHEBI:57305"/>
        <dbReference type="ChEBI" id="CHEBI:57453"/>
        <dbReference type="EC" id="2.1.2.1"/>
    </reaction>
</comment>
<comment type="cofactor">
    <cofactor evidence="1">
        <name>pyridoxal 5'-phosphate</name>
        <dbReference type="ChEBI" id="CHEBI:597326"/>
    </cofactor>
</comment>
<comment type="pathway">
    <text evidence="1">One-carbon metabolism; tetrahydrofolate interconversion.</text>
</comment>
<comment type="pathway">
    <text evidence="1">Amino-acid biosynthesis; glycine biosynthesis; glycine from L-serine: step 1/1.</text>
</comment>
<comment type="subunit">
    <text evidence="1">Homodimer.</text>
</comment>
<comment type="subcellular location">
    <subcellularLocation>
        <location evidence="1">Cytoplasm</location>
    </subcellularLocation>
</comment>
<comment type="similarity">
    <text evidence="1">Belongs to the SHMT family.</text>
</comment>
<evidence type="ECO:0000255" key="1">
    <source>
        <dbReference type="HAMAP-Rule" id="MF_00051"/>
    </source>
</evidence>
<dbReference type="EC" id="2.1.2.1" evidence="1"/>
<dbReference type="EMBL" id="CP000563">
    <property type="protein sequence ID" value="ABN62643.1"/>
    <property type="molecule type" value="Genomic_DNA"/>
</dbReference>
<dbReference type="RefSeq" id="WP_011847461.1">
    <property type="nucleotide sequence ID" value="NC_009052.1"/>
</dbReference>
<dbReference type="SMR" id="A3D7D0"/>
<dbReference type="STRING" id="325240.Sbal_3162"/>
<dbReference type="KEGG" id="sbl:Sbal_3162"/>
<dbReference type="HOGENOM" id="CLU_022477_2_1_6"/>
<dbReference type="OrthoDB" id="9803846at2"/>
<dbReference type="UniPathway" id="UPA00193"/>
<dbReference type="UniPathway" id="UPA00288">
    <property type="reaction ID" value="UER01023"/>
</dbReference>
<dbReference type="Proteomes" id="UP000001557">
    <property type="component" value="Chromosome"/>
</dbReference>
<dbReference type="GO" id="GO:0005829">
    <property type="term" value="C:cytosol"/>
    <property type="evidence" value="ECO:0007669"/>
    <property type="project" value="TreeGrafter"/>
</dbReference>
<dbReference type="GO" id="GO:0004372">
    <property type="term" value="F:glycine hydroxymethyltransferase activity"/>
    <property type="evidence" value="ECO:0007669"/>
    <property type="project" value="UniProtKB-UniRule"/>
</dbReference>
<dbReference type="GO" id="GO:0030170">
    <property type="term" value="F:pyridoxal phosphate binding"/>
    <property type="evidence" value="ECO:0007669"/>
    <property type="project" value="UniProtKB-UniRule"/>
</dbReference>
<dbReference type="GO" id="GO:0019264">
    <property type="term" value="P:glycine biosynthetic process from serine"/>
    <property type="evidence" value="ECO:0007669"/>
    <property type="project" value="UniProtKB-UniRule"/>
</dbReference>
<dbReference type="GO" id="GO:0035999">
    <property type="term" value="P:tetrahydrofolate interconversion"/>
    <property type="evidence" value="ECO:0007669"/>
    <property type="project" value="UniProtKB-UniRule"/>
</dbReference>
<dbReference type="CDD" id="cd00378">
    <property type="entry name" value="SHMT"/>
    <property type="match status" value="1"/>
</dbReference>
<dbReference type="FunFam" id="3.40.640.10:FF:000001">
    <property type="entry name" value="Serine hydroxymethyltransferase"/>
    <property type="match status" value="1"/>
</dbReference>
<dbReference type="FunFam" id="3.90.1150.10:FF:000003">
    <property type="entry name" value="Serine hydroxymethyltransferase"/>
    <property type="match status" value="1"/>
</dbReference>
<dbReference type="Gene3D" id="3.90.1150.10">
    <property type="entry name" value="Aspartate Aminotransferase, domain 1"/>
    <property type="match status" value="1"/>
</dbReference>
<dbReference type="Gene3D" id="3.40.640.10">
    <property type="entry name" value="Type I PLP-dependent aspartate aminotransferase-like (Major domain)"/>
    <property type="match status" value="1"/>
</dbReference>
<dbReference type="HAMAP" id="MF_00051">
    <property type="entry name" value="SHMT"/>
    <property type="match status" value="1"/>
</dbReference>
<dbReference type="InterPro" id="IPR015424">
    <property type="entry name" value="PyrdxlP-dep_Trfase"/>
</dbReference>
<dbReference type="InterPro" id="IPR015421">
    <property type="entry name" value="PyrdxlP-dep_Trfase_major"/>
</dbReference>
<dbReference type="InterPro" id="IPR015422">
    <property type="entry name" value="PyrdxlP-dep_Trfase_small"/>
</dbReference>
<dbReference type="InterPro" id="IPR001085">
    <property type="entry name" value="Ser_HO-MeTrfase"/>
</dbReference>
<dbReference type="InterPro" id="IPR049943">
    <property type="entry name" value="Ser_HO-MeTrfase-like"/>
</dbReference>
<dbReference type="InterPro" id="IPR019798">
    <property type="entry name" value="Ser_HO-MeTrfase_PLP_BS"/>
</dbReference>
<dbReference type="InterPro" id="IPR039429">
    <property type="entry name" value="SHMT-like_dom"/>
</dbReference>
<dbReference type="NCBIfam" id="NF000586">
    <property type="entry name" value="PRK00011.1"/>
    <property type="match status" value="1"/>
</dbReference>
<dbReference type="PANTHER" id="PTHR11680">
    <property type="entry name" value="SERINE HYDROXYMETHYLTRANSFERASE"/>
    <property type="match status" value="1"/>
</dbReference>
<dbReference type="PANTHER" id="PTHR11680:SF50">
    <property type="entry name" value="SERINE HYDROXYMETHYLTRANSFERASE"/>
    <property type="match status" value="1"/>
</dbReference>
<dbReference type="Pfam" id="PF00464">
    <property type="entry name" value="SHMT"/>
    <property type="match status" value="1"/>
</dbReference>
<dbReference type="PIRSF" id="PIRSF000412">
    <property type="entry name" value="SHMT"/>
    <property type="match status" value="1"/>
</dbReference>
<dbReference type="SUPFAM" id="SSF53383">
    <property type="entry name" value="PLP-dependent transferases"/>
    <property type="match status" value="1"/>
</dbReference>
<dbReference type="PROSITE" id="PS00096">
    <property type="entry name" value="SHMT"/>
    <property type="match status" value="1"/>
</dbReference>
<keyword id="KW-0028">Amino-acid biosynthesis</keyword>
<keyword id="KW-0963">Cytoplasm</keyword>
<keyword id="KW-0554">One-carbon metabolism</keyword>
<keyword id="KW-0663">Pyridoxal phosphate</keyword>
<keyword id="KW-1185">Reference proteome</keyword>
<keyword id="KW-0808">Transferase</keyword>
<name>GLYA_SHEB5</name>
<feature type="chain" id="PRO_1000006313" description="Serine hydroxymethyltransferase">
    <location>
        <begin position="1"/>
        <end position="417"/>
    </location>
</feature>
<feature type="binding site" evidence="1">
    <location>
        <position position="121"/>
    </location>
    <ligand>
        <name>(6S)-5,6,7,8-tetrahydrofolate</name>
        <dbReference type="ChEBI" id="CHEBI:57453"/>
    </ligand>
</feature>
<feature type="binding site" evidence="1">
    <location>
        <begin position="125"/>
        <end position="127"/>
    </location>
    <ligand>
        <name>(6S)-5,6,7,8-tetrahydrofolate</name>
        <dbReference type="ChEBI" id="CHEBI:57453"/>
    </ligand>
</feature>
<feature type="binding site" evidence="1">
    <location>
        <begin position="355"/>
        <end position="357"/>
    </location>
    <ligand>
        <name>(6S)-5,6,7,8-tetrahydrofolate</name>
        <dbReference type="ChEBI" id="CHEBI:57453"/>
    </ligand>
</feature>
<feature type="site" description="Plays an important role in substrate specificity" evidence="1">
    <location>
        <position position="228"/>
    </location>
</feature>
<feature type="modified residue" description="N6-(pyridoxal phosphate)lysine" evidence="1">
    <location>
        <position position="229"/>
    </location>
</feature>
<sequence>MLKKDMNIADYDPELFKAIQNETLRQEEHIELIASENYTSPRVMEAQGSQLTNKYAEGYPGKRYYGGCEYVDVVETLAIERAKELFGATYANVQPHSGSQANSAVYMALLKPGDTVLGMNLAHGGHLTHGSPVNFSGKLYNIIPYGIDESGKIDYDEMERLAVEHKPKMMIGGFSAYSGIVDWAKMREIADKIGAYLFVDMAHVAGLIAAGVYPNPVPHAHVVTSTTHKTLAGPRGGVILSAADDEDLYKKLNSAVFPGGQGGPLMHVIAGKAVAFKEALEPEFKVYQQQVVNNAKAMVEVFLERGYKIVSGGTSNHLMLVDLIGRDLTGKEADAALGSANITVNKNSVPNDPRSPFVTSGVRIGTPAITRRGFKEVESKELTGWICDILDDASNPAVIERVKGQVLALCARFPVYG</sequence>
<organism>
    <name type="scientific">Shewanella baltica (strain OS155 / ATCC BAA-1091)</name>
    <dbReference type="NCBI Taxonomy" id="325240"/>
    <lineage>
        <taxon>Bacteria</taxon>
        <taxon>Pseudomonadati</taxon>
        <taxon>Pseudomonadota</taxon>
        <taxon>Gammaproteobacteria</taxon>
        <taxon>Alteromonadales</taxon>
        <taxon>Shewanellaceae</taxon>
        <taxon>Shewanella</taxon>
    </lineage>
</organism>
<protein>
    <recommendedName>
        <fullName evidence="1">Serine hydroxymethyltransferase</fullName>
        <shortName evidence="1">SHMT</shortName>
        <shortName evidence="1">Serine methylase</shortName>
        <ecNumber evidence="1">2.1.2.1</ecNumber>
    </recommendedName>
</protein>